<sequence>MSAIVDIVGREVLDSRGNPTVECDVLLESGVMGRAAVPSGASTGSREAIELRDGDKSRYLGKGVLNAVKNINTEISEAVLGLDAAEQSFLDKTLIDLDGTDNKGRLGANAMLAVSMAVARAAAEESGLPLYRYFGGMGAVQLPVPMMNVINGGAHANNSLDLQEMMIIPVGAPSFREAVRWGAEVFHALKKILHDKGISTAVGDEGGFAPSVESHEAAIQLILQAIDKAGYRAGEQIALGLDCAASEFYKDGKYHLEGEGLSLTAQEWTDMMAAWVDKYPIISIEDGMAEGDWDGWKLLTDRLGKNVQIVGDDLFVTNTKILKEGIEKGIANSILIKINQIGTLSETFAAIEMAKRAGYTAVISHRSGETEDSTIADIAVATNAGQIKTGSMSRSDRMAKYNQLLRIEEDLGDVAVYPGRAAFYNLR</sequence>
<accession>B1Y4K4</accession>
<organism>
    <name type="scientific">Leptothrix cholodnii (strain ATCC 51168 / LMG 8142 / SP-6)</name>
    <name type="common">Leptothrix discophora (strain SP-6)</name>
    <dbReference type="NCBI Taxonomy" id="395495"/>
    <lineage>
        <taxon>Bacteria</taxon>
        <taxon>Pseudomonadati</taxon>
        <taxon>Pseudomonadota</taxon>
        <taxon>Betaproteobacteria</taxon>
        <taxon>Burkholderiales</taxon>
        <taxon>Sphaerotilaceae</taxon>
        <taxon>Leptothrix</taxon>
    </lineage>
</organism>
<comment type="function">
    <text evidence="1">Catalyzes the reversible conversion of 2-phosphoglycerate (2-PG) into phosphoenolpyruvate (PEP). It is essential for the degradation of carbohydrates via glycolysis.</text>
</comment>
<comment type="catalytic activity">
    <reaction evidence="1">
        <text>(2R)-2-phosphoglycerate = phosphoenolpyruvate + H2O</text>
        <dbReference type="Rhea" id="RHEA:10164"/>
        <dbReference type="ChEBI" id="CHEBI:15377"/>
        <dbReference type="ChEBI" id="CHEBI:58289"/>
        <dbReference type="ChEBI" id="CHEBI:58702"/>
        <dbReference type="EC" id="4.2.1.11"/>
    </reaction>
</comment>
<comment type="cofactor">
    <cofactor evidence="1">
        <name>Mg(2+)</name>
        <dbReference type="ChEBI" id="CHEBI:18420"/>
    </cofactor>
    <text evidence="1">Binds a second Mg(2+) ion via substrate during catalysis.</text>
</comment>
<comment type="pathway">
    <text evidence="1">Carbohydrate degradation; glycolysis; pyruvate from D-glyceraldehyde 3-phosphate: step 4/5.</text>
</comment>
<comment type="subcellular location">
    <subcellularLocation>
        <location evidence="1">Cytoplasm</location>
    </subcellularLocation>
    <subcellularLocation>
        <location evidence="1">Secreted</location>
    </subcellularLocation>
    <subcellularLocation>
        <location evidence="1">Cell surface</location>
    </subcellularLocation>
    <text evidence="1">Fractions of enolase are present in both the cytoplasm and on the cell surface.</text>
</comment>
<comment type="similarity">
    <text evidence="1">Belongs to the enolase family.</text>
</comment>
<evidence type="ECO:0000255" key="1">
    <source>
        <dbReference type="HAMAP-Rule" id="MF_00318"/>
    </source>
</evidence>
<name>ENO_LEPCP</name>
<feature type="chain" id="PRO_1000115880" description="Enolase">
    <location>
        <begin position="1"/>
        <end position="427"/>
    </location>
</feature>
<feature type="active site" description="Proton donor" evidence="1">
    <location>
        <position position="205"/>
    </location>
</feature>
<feature type="active site" description="Proton acceptor" evidence="1">
    <location>
        <position position="337"/>
    </location>
</feature>
<feature type="binding site" evidence="1">
    <location>
        <position position="163"/>
    </location>
    <ligand>
        <name>(2R)-2-phosphoglycerate</name>
        <dbReference type="ChEBI" id="CHEBI:58289"/>
    </ligand>
</feature>
<feature type="binding site" evidence="1">
    <location>
        <position position="242"/>
    </location>
    <ligand>
        <name>Mg(2+)</name>
        <dbReference type="ChEBI" id="CHEBI:18420"/>
    </ligand>
</feature>
<feature type="binding site" evidence="1">
    <location>
        <position position="285"/>
    </location>
    <ligand>
        <name>Mg(2+)</name>
        <dbReference type="ChEBI" id="CHEBI:18420"/>
    </ligand>
</feature>
<feature type="binding site" evidence="1">
    <location>
        <position position="312"/>
    </location>
    <ligand>
        <name>Mg(2+)</name>
        <dbReference type="ChEBI" id="CHEBI:18420"/>
    </ligand>
</feature>
<feature type="binding site" evidence="1">
    <location>
        <position position="337"/>
    </location>
    <ligand>
        <name>(2R)-2-phosphoglycerate</name>
        <dbReference type="ChEBI" id="CHEBI:58289"/>
    </ligand>
</feature>
<feature type="binding site" evidence="1">
    <location>
        <position position="366"/>
    </location>
    <ligand>
        <name>(2R)-2-phosphoglycerate</name>
        <dbReference type="ChEBI" id="CHEBI:58289"/>
    </ligand>
</feature>
<feature type="binding site" evidence="1">
    <location>
        <position position="367"/>
    </location>
    <ligand>
        <name>(2R)-2-phosphoglycerate</name>
        <dbReference type="ChEBI" id="CHEBI:58289"/>
    </ligand>
</feature>
<feature type="binding site" evidence="1">
    <location>
        <position position="388"/>
    </location>
    <ligand>
        <name>(2R)-2-phosphoglycerate</name>
        <dbReference type="ChEBI" id="CHEBI:58289"/>
    </ligand>
</feature>
<gene>
    <name evidence="1" type="primary">eno</name>
    <name type="ordered locus">Lcho_1174</name>
</gene>
<keyword id="KW-0963">Cytoplasm</keyword>
<keyword id="KW-0324">Glycolysis</keyword>
<keyword id="KW-0456">Lyase</keyword>
<keyword id="KW-0460">Magnesium</keyword>
<keyword id="KW-0479">Metal-binding</keyword>
<keyword id="KW-1185">Reference proteome</keyword>
<keyword id="KW-0964">Secreted</keyword>
<protein>
    <recommendedName>
        <fullName evidence="1">Enolase</fullName>
        <ecNumber evidence="1">4.2.1.11</ecNumber>
    </recommendedName>
    <alternativeName>
        <fullName evidence="1">2-phospho-D-glycerate hydro-lyase</fullName>
    </alternativeName>
    <alternativeName>
        <fullName evidence="1">2-phosphoglycerate dehydratase</fullName>
    </alternativeName>
</protein>
<proteinExistence type="inferred from homology"/>
<dbReference type="EC" id="4.2.1.11" evidence="1"/>
<dbReference type="EMBL" id="CP001013">
    <property type="protein sequence ID" value="ACB33443.1"/>
    <property type="molecule type" value="Genomic_DNA"/>
</dbReference>
<dbReference type="RefSeq" id="WP_012346205.1">
    <property type="nucleotide sequence ID" value="NC_010524.1"/>
</dbReference>
<dbReference type="SMR" id="B1Y4K4"/>
<dbReference type="STRING" id="395495.Lcho_1174"/>
<dbReference type="KEGG" id="lch:Lcho_1174"/>
<dbReference type="eggNOG" id="COG0148">
    <property type="taxonomic scope" value="Bacteria"/>
</dbReference>
<dbReference type="HOGENOM" id="CLU_031223_2_1_4"/>
<dbReference type="OrthoDB" id="9804716at2"/>
<dbReference type="UniPathway" id="UPA00109">
    <property type="reaction ID" value="UER00187"/>
</dbReference>
<dbReference type="Proteomes" id="UP000001693">
    <property type="component" value="Chromosome"/>
</dbReference>
<dbReference type="GO" id="GO:0009986">
    <property type="term" value="C:cell surface"/>
    <property type="evidence" value="ECO:0007669"/>
    <property type="project" value="UniProtKB-SubCell"/>
</dbReference>
<dbReference type="GO" id="GO:0005576">
    <property type="term" value="C:extracellular region"/>
    <property type="evidence" value="ECO:0007669"/>
    <property type="project" value="UniProtKB-SubCell"/>
</dbReference>
<dbReference type="GO" id="GO:0000015">
    <property type="term" value="C:phosphopyruvate hydratase complex"/>
    <property type="evidence" value="ECO:0007669"/>
    <property type="project" value="InterPro"/>
</dbReference>
<dbReference type="GO" id="GO:0000287">
    <property type="term" value="F:magnesium ion binding"/>
    <property type="evidence" value="ECO:0007669"/>
    <property type="project" value="UniProtKB-UniRule"/>
</dbReference>
<dbReference type="GO" id="GO:0004634">
    <property type="term" value="F:phosphopyruvate hydratase activity"/>
    <property type="evidence" value="ECO:0007669"/>
    <property type="project" value="UniProtKB-UniRule"/>
</dbReference>
<dbReference type="GO" id="GO:0006096">
    <property type="term" value="P:glycolytic process"/>
    <property type="evidence" value="ECO:0007669"/>
    <property type="project" value="UniProtKB-UniRule"/>
</dbReference>
<dbReference type="CDD" id="cd03313">
    <property type="entry name" value="enolase"/>
    <property type="match status" value="1"/>
</dbReference>
<dbReference type="FunFam" id="3.20.20.120:FF:000001">
    <property type="entry name" value="Enolase"/>
    <property type="match status" value="1"/>
</dbReference>
<dbReference type="FunFam" id="3.30.390.10:FF:000001">
    <property type="entry name" value="Enolase"/>
    <property type="match status" value="1"/>
</dbReference>
<dbReference type="Gene3D" id="3.20.20.120">
    <property type="entry name" value="Enolase-like C-terminal domain"/>
    <property type="match status" value="1"/>
</dbReference>
<dbReference type="Gene3D" id="3.30.390.10">
    <property type="entry name" value="Enolase-like, N-terminal domain"/>
    <property type="match status" value="1"/>
</dbReference>
<dbReference type="HAMAP" id="MF_00318">
    <property type="entry name" value="Enolase"/>
    <property type="match status" value="1"/>
</dbReference>
<dbReference type="InterPro" id="IPR000941">
    <property type="entry name" value="Enolase"/>
</dbReference>
<dbReference type="InterPro" id="IPR036849">
    <property type="entry name" value="Enolase-like_C_sf"/>
</dbReference>
<dbReference type="InterPro" id="IPR029017">
    <property type="entry name" value="Enolase-like_N"/>
</dbReference>
<dbReference type="InterPro" id="IPR020810">
    <property type="entry name" value="Enolase_C"/>
</dbReference>
<dbReference type="InterPro" id="IPR020809">
    <property type="entry name" value="Enolase_CS"/>
</dbReference>
<dbReference type="InterPro" id="IPR020811">
    <property type="entry name" value="Enolase_N"/>
</dbReference>
<dbReference type="NCBIfam" id="TIGR01060">
    <property type="entry name" value="eno"/>
    <property type="match status" value="1"/>
</dbReference>
<dbReference type="PANTHER" id="PTHR11902">
    <property type="entry name" value="ENOLASE"/>
    <property type="match status" value="1"/>
</dbReference>
<dbReference type="PANTHER" id="PTHR11902:SF1">
    <property type="entry name" value="ENOLASE"/>
    <property type="match status" value="1"/>
</dbReference>
<dbReference type="Pfam" id="PF00113">
    <property type="entry name" value="Enolase_C"/>
    <property type="match status" value="1"/>
</dbReference>
<dbReference type="Pfam" id="PF03952">
    <property type="entry name" value="Enolase_N"/>
    <property type="match status" value="1"/>
</dbReference>
<dbReference type="PIRSF" id="PIRSF001400">
    <property type="entry name" value="Enolase"/>
    <property type="match status" value="1"/>
</dbReference>
<dbReference type="PRINTS" id="PR00148">
    <property type="entry name" value="ENOLASE"/>
</dbReference>
<dbReference type="SFLD" id="SFLDF00002">
    <property type="entry name" value="enolase"/>
    <property type="match status" value="1"/>
</dbReference>
<dbReference type="SFLD" id="SFLDG00178">
    <property type="entry name" value="enolase"/>
    <property type="match status" value="1"/>
</dbReference>
<dbReference type="SMART" id="SM01192">
    <property type="entry name" value="Enolase_C"/>
    <property type="match status" value="1"/>
</dbReference>
<dbReference type="SMART" id="SM01193">
    <property type="entry name" value="Enolase_N"/>
    <property type="match status" value="1"/>
</dbReference>
<dbReference type="SUPFAM" id="SSF51604">
    <property type="entry name" value="Enolase C-terminal domain-like"/>
    <property type="match status" value="1"/>
</dbReference>
<dbReference type="SUPFAM" id="SSF54826">
    <property type="entry name" value="Enolase N-terminal domain-like"/>
    <property type="match status" value="1"/>
</dbReference>
<dbReference type="PROSITE" id="PS00164">
    <property type="entry name" value="ENOLASE"/>
    <property type="match status" value="1"/>
</dbReference>
<reference key="1">
    <citation type="submission" date="2008-03" db="EMBL/GenBank/DDBJ databases">
        <title>Complete sequence of Leptothrix cholodnii SP-6.</title>
        <authorList>
            <consortium name="US DOE Joint Genome Institute"/>
            <person name="Copeland A."/>
            <person name="Lucas S."/>
            <person name="Lapidus A."/>
            <person name="Glavina del Rio T."/>
            <person name="Dalin E."/>
            <person name="Tice H."/>
            <person name="Bruce D."/>
            <person name="Goodwin L."/>
            <person name="Pitluck S."/>
            <person name="Chertkov O."/>
            <person name="Brettin T."/>
            <person name="Detter J.C."/>
            <person name="Han C."/>
            <person name="Kuske C.R."/>
            <person name="Schmutz J."/>
            <person name="Larimer F."/>
            <person name="Land M."/>
            <person name="Hauser L."/>
            <person name="Kyrpides N."/>
            <person name="Lykidis A."/>
            <person name="Emerson D."/>
            <person name="Richardson P."/>
        </authorList>
    </citation>
    <scope>NUCLEOTIDE SEQUENCE [LARGE SCALE GENOMIC DNA]</scope>
    <source>
        <strain>ATCC 51168 / LMG 8142 / SP-6</strain>
    </source>
</reference>